<keyword id="KW-0150">Chloroplast</keyword>
<keyword id="KW-0456">Lyase</keyword>
<keyword id="KW-0934">Plastid</keyword>
<proteinExistence type="inferred from homology"/>
<gene>
    <name evidence="1" type="primary">cpcS</name>
    <name evidence="1" type="synonym">ycf58</name>
</gene>
<accession>P51235</accession>
<dbReference type="EC" id="4.-.-.-" evidence="1"/>
<dbReference type="EMBL" id="U38804">
    <property type="protein sequence ID" value="AAC08121.1"/>
    <property type="molecule type" value="Genomic_DNA"/>
</dbReference>
<dbReference type="PIR" id="S73156">
    <property type="entry name" value="S73156"/>
</dbReference>
<dbReference type="SMR" id="P51235"/>
<dbReference type="GO" id="GO:0009507">
    <property type="term" value="C:chloroplast"/>
    <property type="evidence" value="ECO:0007669"/>
    <property type="project" value="UniProtKB-SubCell"/>
</dbReference>
<dbReference type="GO" id="GO:0016829">
    <property type="term" value="F:lyase activity"/>
    <property type="evidence" value="ECO:0007669"/>
    <property type="project" value="UniProtKB-KW"/>
</dbReference>
<dbReference type="CDD" id="cd16339">
    <property type="entry name" value="CpcS"/>
    <property type="match status" value="1"/>
</dbReference>
<dbReference type="Gene3D" id="2.40.128.20">
    <property type="match status" value="1"/>
</dbReference>
<dbReference type="HAMAP" id="MF_01459">
    <property type="entry name" value="Chrphore_lyase_CpxS"/>
    <property type="match status" value="1"/>
</dbReference>
<dbReference type="InterPro" id="IPR012674">
    <property type="entry name" value="Calycin"/>
</dbReference>
<dbReference type="InterPro" id="IPR018536">
    <property type="entry name" value="CpcS/CpeS"/>
</dbReference>
<dbReference type="Pfam" id="PF09367">
    <property type="entry name" value="CpeS"/>
    <property type="match status" value="2"/>
</dbReference>
<name>CPXS_PORPU</name>
<organism>
    <name type="scientific">Porphyra purpurea</name>
    <name type="common">Red seaweed</name>
    <name type="synonym">Ulva purpurea</name>
    <dbReference type="NCBI Taxonomy" id="2787"/>
    <lineage>
        <taxon>Eukaryota</taxon>
        <taxon>Rhodophyta</taxon>
        <taxon>Bangiophyceae</taxon>
        <taxon>Bangiales</taxon>
        <taxon>Bangiaceae</taxon>
        <taxon>Porphyra</taxon>
    </lineage>
</organism>
<geneLocation type="chloroplast"/>
<reference key="1">
    <citation type="journal article" date="1995" name="Plant Mol. Biol. Rep.">
        <title>Complete nucleotide sequence of the Porphyra purpurea chloroplast genome.</title>
        <authorList>
            <person name="Reith M.E."/>
            <person name="Munholland J."/>
        </authorList>
    </citation>
    <scope>NUCLEOTIDE SEQUENCE [LARGE SCALE GENOMIC DNA]</scope>
    <source>
        <strain>Avonport</strain>
    </source>
</reference>
<feature type="chain" id="PRO_0000217478" description="Chromophore lyase CpcS/CpeS homolog">
    <location>
        <begin position="1"/>
        <end position="149"/>
    </location>
</feature>
<sequence length="149" mass="17246">MEQLISFFDRSKGKWISQRTTYKLSNKQMNSLQSSIIIKPDQSSSNSQLIASLRWGEISRQIIKNLNNQDFVNGNFKFHLRFTNQFNTKQVVTLCSITDKSLITFKTRYGSTTVDETYWFATDNLRLSTSIIKQCNFCVAVSFCSEIKI</sequence>
<protein>
    <recommendedName>
        <fullName evidence="1">Chromophore lyase CpcS/CpeS homolog</fullName>
        <ecNumber evidence="1">4.-.-.-</ecNumber>
    </recommendedName>
    <alternativeName>
        <fullName>ORF149</fullName>
    </alternativeName>
</protein>
<evidence type="ECO:0000255" key="1">
    <source>
        <dbReference type="HAMAP-Rule" id="MF_01459"/>
    </source>
</evidence>
<comment type="function">
    <text evidence="1">Might function to covalently attach a chromophore to Cys residue(s) of phycobiliproteins.</text>
</comment>
<comment type="subcellular location">
    <subcellularLocation>
        <location>Plastid</location>
        <location>Chloroplast</location>
    </subcellularLocation>
</comment>
<comment type="similarity">
    <text evidence="1">Belongs to the CpcS/CpeS biliprotein lyase family.</text>
</comment>